<sequence>METGSEEEKWEKLDAEFDHFVVDMKPFVLKLPHRSERQRCALWIRKLCEPSGTGAGLMGRKNRNLYAKLLLHMLRRGILEGPFTHRPEPGTLKTLPSYMSIYFDEPNQAQPKDSSPEKLPDWVRGELQTGEQRLSDSWQCSSGEDNTLVLAASDAHREQYTGKLRMRSHSVSPTYREDKQHITSKICEVHSKTSPISLDDSDIEVRLNSWNLGIENPRYLRQKPLPVSLMTPKGSLRKASSLHDDHFLSRMHEKELDMKTKMMEAKFSEEKLKLQQKHDAEVQKILERKNNELEELKILYKKKQTETEETIRKLEKKVQILIRDCQVIRETKENQITELKKICEQSTESLNNDWEKKLHNAVAEMEKDKFELQKHHTETIQELLEDTNVRLSKMEADYVVQMQSTNHMIKELEGRVQQLMGEAENSNLQRQKLTQEKLELERCYQITCNELQELKTRRNILHKEKEHLVNDYEQNVKLLKTKYDSDINLLRQEHALSTSKTSGVIEELEQNICQLKQQVQESELQRKQQVKDQENKFHMEKNHLKHTYEKKVHELQSELDKEKEDAQRKIHKFEEALKEKEEQLSRVTEVQRLQAQQADAALEEFKRQVEVNSEKVYGEMKEQMEKVEADLTRSKSLREKQSKEFLWQLEDAKQRYEQQIVELKLEHEQEKTHLLQQHSAEKDSLVRDHDREIENLEKQLRAANMEHENQIQESKKRDAQVIADMEAQVHKLREELISVNSQRKQQLIELGLLREEEKQRAAKDHETAVKKLKAESERVKMELKKTHAAETEMTLEKANSRLKQIEKEYTQKLAKSSQIIAELQTTISSLKEESSRQQLAAERRLQDVIQKFEDEKQQLIRDNDQAIKALQDELETRSHQVRSAEKKLHHKELEAQEQIMYIRQEYETKFKGLMPASLRQELEDTISSLKSQVNFLQKRASILQEELTTYQSRR</sequence>
<comment type="subcellular location">
    <subcellularLocation>
        <location evidence="1">Cytoplasm</location>
        <location evidence="1">Cytoskeleton</location>
        <location evidence="1">Microtubule organizing center</location>
        <location evidence="1">Centrosome</location>
    </subcellularLocation>
    <text evidence="1">Localizes around spindle poles in some cells.</text>
</comment>
<comment type="alternative products">
    <event type="alternative splicing"/>
    <isoform>
        <id>Q5PR68-1</id>
        <name>1</name>
        <sequence type="displayed"/>
    </isoform>
    <isoform>
        <id>Q5PR68-2</id>
        <name>2</name>
        <sequence type="described" ref="VSP_018340 VSP_018341"/>
    </isoform>
</comment>
<comment type="sequence caution" evidence="5">
    <conflict type="erroneous initiation">
        <sequence resource="EMBL-CDS" id="AAH86808"/>
    </conflict>
</comment>
<proteinExistence type="evidence at transcript level"/>
<reference key="1">
    <citation type="journal article" date="2005" name="Science">
        <title>The transcriptional landscape of the mammalian genome.</title>
        <authorList>
            <person name="Carninci P."/>
            <person name="Kasukawa T."/>
            <person name="Katayama S."/>
            <person name="Gough J."/>
            <person name="Frith M.C."/>
            <person name="Maeda N."/>
            <person name="Oyama R."/>
            <person name="Ravasi T."/>
            <person name="Lenhard B."/>
            <person name="Wells C."/>
            <person name="Kodzius R."/>
            <person name="Shimokawa K."/>
            <person name="Bajic V.B."/>
            <person name="Brenner S.E."/>
            <person name="Batalov S."/>
            <person name="Forrest A.R."/>
            <person name="Zavolan M."/>
            <person name="Davis M.J."/>
            <person name="Wilming L.G."/>
            <person name="Aidinis V."/>
            <person name="Allen J.E."/>
            <person name="Ambesi-Impiombato A."/>
            <person name="Apweiler R."/>
            <person name="Aturaliya R.N."/>
            <person name="Bailey T.L."/>
            <person name="Bansal M."/>
            <person name="Baxter L."/>
            <person name="Beisel K.W."/>
            <person name="Bersano T."/>
            <person name="Bono H."/>
            <person name="Chalk A.M."/>
            <person name="Chiu K.P."/>
            <person name="Choudhary V."/>
            <person name="Christoffels A."/>
            <person name="Clutterbuck D.R."/>
            <person name="Crowe M.L."/>
            <person name="Dalla E."/>
            <person name="Dalrymple B.P."/>
            <person name="de Bono B."/>
            <person name="Della Gatta G."/>
            <person name="di Bernardo D."/>
            <person name="Down T."/>
            <person name="Engstrom P."/>
            <person name="Fagiolini M."/>
            <person name="Faulkner G."/>
            <person name="Fletcher C.F."/>
            <person name="Fukushima T."/>
            <person name="Furuno M."/>
            <person name="Futaki S."/>
            <person name="Gariboldi M."/>
            <person name="Georgii-Hemming P."/>
            <person name="Gingeras T.R."/>
            <person name="Gojobori T."/>
            <person name="Green R.E."/>
            <person name="Gustincich S."/>
            <person name="Harbers M."/>
            <person name="Hayashi Y."/>
            <person name="Hensch T.K."/>
            <person name="Hirokawa N."/>
            <person name="Hill D."/>
            <person name="Huminiecki L."/>
            <person name="Iacono M."/>
            <person name="Ikeo K."/>
            <person name="Iwama A."/>
            <person name="Ishikawa T."/>
            <person name="Jakt M."/>
            <person name="Kanapin A."/>
            <person name="Katoh M."/>
            <person name="Kawasawa Y."/>
            <person name="Kelso J."/>
            <person name="Kitamura H."/>
            <person name="Kitano H."/>
            <person name="Kollias G."/>
            <person name="Krishnan S.P."/>
            <person name="Kruger A."/>
            <person name="Kummerfeld S.K."/>
            <person name="Kurochkin I.V."/>
            <person name="Lareau L.F."/>
            <person name="Lazarevic D."/>
            <person name="Lipovich L."/>
            <person name="Liu J."/>
            <person name="Liuni S."/>
            <person name="McWilliam S."/>
            <person name="Madan Babu M."/>
            <person name="Madera M."/>
            <person name="Marchionni L."/>
            <person name="Matsuda H."/>
            <person name="Matsuzawa S."/>
            <person name="Miki H."/>
            <person name="Mignone F."/>
            <person name="Miyake S."/>
            <person name="Morris K."/>
            <person name="Mottagui-Tabar S."/>
            <person name="Mulder N."/>
            <person name="Nakano N."/>
            <person name="Nakauchi H."/>
            <person name="Ng P."/>
            <person name="Nilsson R."/>
            <person name="Nishiguchi S."/>
            <person name="Nishikawa S."/>
            <person name="Nori F."/>
            <person name="Ohara O."/>
            <person name="Okazaki Y."/>
            <person name="Orlando V."/>
            <person name="Pang K.C."/>
            <person name="Pavan W.J."/>
            <person name="Pavesi G."/>
            <person name="Pesole G."/>
            <person name="Petrovsky N."/>
            <person name="Piazza S."/>
            <person name="Reed J."/>
            <person name="Reid J.F."/>
            <person name="Ring B.Z."/>
            <person name="Ringwald M."/>
            <person name="Rost B."/>
            <person name="Ruan Y."/>
            <person name="Salzberg S.L."/>
            <person name="Sandelin A."/>
            <person name="Schneider C."/>
            <person name="Schoenbach C."/>
            <person name="Sekiguchi K."/>
            <person name="Semple C.A."/>
            <person name="Seno S."/>
            <person name="Sessa L."/>
            <person name="Sheng Y."/>
            <person name="Shibata Y."/>
            <person name="Shimada H."/>
            <person name="Shimada K."/>
            <person name="Silva D."/>
            <person name="Sinclair B."/>
            <person name="Sperling S."/>
            <person name="Stupka E."/>
            <person name="Sugiura K."/>
            <person name="Sultana R."/>
            <person name="Takenaka Y."/>
            <person name="Taki K."/>
            <person name="Tammoja K."/>
            <person name="Tan S.L."/>
            <person name="Tang S."/>
            <person name="Taylor M.S."/>
            <person name="Tegner J."/>
            <person name="Teichmann S.A."/>
            <person name="Ueda H.R."/>
            <person name="van Nimwegen E."/>
            <person name="Verardo R."/>
            <person name="Wei C.L."/>
            <person name="Yagi K."/>
            <person name="Yamanishi H."/>
            <person name="Zabarovsky E."/>
            <person name="Zhu S."/>
            <person name="Zimmer A."/>
            <person name="Hide W."/>
            <person name="Bult C."/>
            <person name="Grimmond S.M."/>
            <person name="Teasdale R.D."/>
            <person name="Liu E.T."/>
            <person name="Brusic V."/>
            <person name="Quackenbush J."/>
            <person name="Wahlestedt C."/>
            <person name="Mattick J.S."/>
            <person name="Hume D.A."/>
            <person name="Kai C."/>
            <person name="Sasaki D."/>
            <person name="Tomaru Y."/>
            <person name="Fukuda S."/>
            <person name="Kanamori-Katayama M."/>
            <person name="Suzuki M."/>
            <person name="Aoki J."/>
            <person name="Arakawa T."/>
            <person name="Iida J."/>
            <person name="Imamura K."/>
            <person name="Itoh M."/>
            <person name="Kato T."/>
            <person name="Kawaji H."/>
            <person name="Kawagashira N."/>
            <person name="Kawashima T."/>
            <person name="Kojima M."/>
            <person name="Kondo S."/>
            <person name="Konno H."/>
            <person name="Nakano K."/>
            <person name="Ninomiya N."/>
            <person name="Nishio T."/>
            <person name="Okada M."/>
            <person name="Plessy C."/>
            <person name="Shibata K."/>
            <person name="Shiraki T."/>
            <person name="Suzuki S."/>
            <person name="Tagami M."/>
            <person name="Waki K."/>
            <person name="Watahiki A."/>
            <person name="Okamura-Oho Y."/>
            <person name="Suzuki H."/>
            <person name="Kawai J."/>
            <person name="Hayashizaki Y."/>
        </authorList>
    </citation>
    <scope>NUCLEOTIDE SEQUENCE [LARGE SCALE MRNA] (ISOFORM 2)</scope>
    <scope>NUCLEOTIDE SEQUENCE [LARGE SCALE MRNA] OF 79-285 (ISOFORM 1)</scope>
    <source>
        <strain>C57BL/6J</strain>
        <tissue>Testis</tissue>
    </source>
</reference>
<reference key="2">
    <citation type="journal article" date="2009" name="PLoS Biol.">
        <title>Lineage-specific biology revealed by a finished genome assembly of the mouse.</title>
        <authorList>
            <person name="Church D.M."/>
            <person name="Goodstadt L."/>
            <person name="Hillier L.W."/>
            <person name="Zody M.C."/>
            <person name="Goldstein S."/>
            <person name="She X."/>
            <person name="Bult C.J."/>
            <person name="Agarwala R."/>
            <person name="Cherry J.L."/>
            <person name="DiCuccio M."/>
            <person name="Hlavina W."/>
            <person name="Kapustin Y."/>
            <person name="Meric P."/>
            <person name="Maglott D."/>
            <person name="Birtle Z."/>
            <person name="Marques A.C."/>
            <person name="Graves T."/>
            <person name="Zhou S."/>
            <person name="Teague B."/>
            <person name="Potamousis K."/>
            <person name="Churas C."/>
            <person name="Place M."/>
            <person name="Herschleb J."/>
            <person name="Runnheim R."/>
            <person name="Forrest D."/>
            <person name="Amos-Landgraf J."/>
            <person name="Schwartz D.C."/>
            <person name="Cheng Z."/>
            <person name="Lindblad-Toh K."/>
            <person name="Eichler E.E."/>
            <person name="Ponting C.P."/>
        </authorList>
    </citation>
    <scope>NUCLEOTIDE SEQUENCE [LARGE SCALE GENOMIC DNA]</scope>
    <source>
        <strain>C57BL/6J</strain>
    </source>
</reference>
<reference key="3">
    <citation type="journal article" date="2004" name="Genome Res.">
        <title>The status, quality, and expansion of the NIH full-length cDNA project: the Mammalian Gene Collection (MGC).</title>
        <authorList>
            <consortium name="The MGC Project Team"/>
        </authorList>
    </citation>
    <scope>NUCLEOTIDE SEQUENCE [LARGE SCALE MRNA] (ISOFORM 2)</scope>
    <scope>NUCLEOTIDE SEQUENCE [LARGE SCALE MRNA] OF 188-954 (ISOFORM 1)</scope>
    <source>
        <strain>C57BL/6J</strain>
        <tissue>Brain</tissue>
        <tissue>Mammary gland</tissue>
        <tissue>Testis</tissue>
    </source>
</reference>
<reference key="4">
    <citation type="journal article" date="2001" name="Genome Res.">
        <title>Construction of long-transcript enriched cDNA libraries from submicrogram amounts of total RNAs by a universal PCR amplification method.</title>
        <authorList>
            <person name="Piao Y."/>
            <person name="Ko N.T."/>
            <person name="Lim M.K."/>
            <person name="Ko M.S.H."/>
        </authorList>
    </citation>
    <scope>NUCLEOTIDE SEQUENCE [LARGE SCALE MRNA] OF 1-206 (ISOFORM 1)</scope>
</reference>
<protein>
    <recommendedName>
        <fullName>Centrosomal protein of 112 kDa</fullName>
        <shortName>Cep112</shortName>
    </recommendedName>
    <alternativeName>
        <fullName>Coiled-coil domain-containing protein 46</fullName>
    </alternativeName>
</protein>
<organism>
    <name type="scientific">Mus musculus</name>
    <name type="common">Mouse</name>
    <dbReference type="NCBI Taxonomy" id="10090"/>
    <lineage>
        <taxon>Eukaryota</taxon>
        <taxon>Metazoa</taxon>
        <taxon>Chordata</taxon>
        <taxon>Craniata</taxon>
        <taxon>Vertebrata</taxon>
        <taxon>Euteleostomi</taxon>
        <taxon>Mammalia</taxon>
        <taxon>Eutheria</taxon>
        <taxon>Euarchontoglires</taxon>
        <taxon>Glires</taxon>
        <taxon>Rodentia</taxon>
        <taxon>Myomorpha</taxon>
        <taxon>Muroidea</taxon>
        <taxon>Muridae</taxon>
        <taxon>Murinae</taxon>
        <taxon>Mus</taxon>
        <taxon>Mus</taxon>
    </lineage>
</organism>
<accession>Q5PR68</accession>
<accession>Q80ZN6</accession>
<accession>Q99JS4</accession>
<accession>Q9D9T1</accession>
<gene>
    <name type="primary">Cep112</name>
    <name type="synonym">Ccdc46</name>
</gene>
<dbReference type="EMBL" id="AK006504">
    <property type="protein sequence ID" value="BAB24623.1"/>
    <property type="molecule type" value="mRNA"/>
</dbReference>
<dbReference type="EMBL" id="CF900073">
    <property type="status" value="NOT_ANNOTATED_CDS"/>
    <property type="molecule type" value="mRNA"/>
</dbReference>
<dbReference type="EMBL" id="AL935172">
    <property type="status" value="NOT_ANNOTATED_CDS"/>
    <property type="molecule type" value="Genomic_DNA"/>
</dbReference>
<dbReference type="EMBL" id="BX511139">
    <property type="status" value="NOT_ANNOTATED_CDS"/>
    <property type="molecule type" value="Genomic_DNA"/>
</dbReference>
<dbReference type="EMBL" id="AL645974">
    <property type="status" value="NOT_ANNOTATED_CDS"/>
    <property type="molecule type" value="Genomic_DNA"/>
</dbReference>
<dbReference type="EMBL" id="AL662893">
    <property type="status" value="NOT_ANNOTATED_CDS"/>
    <property type="molecule type" value="Genomic_DNA"/>
</dbReference>
<dbReference type="EMBL" id="BC005723">
    <property type="protein sequence ID" value="AAH05723.1"/>
    <property type="molecule type" value="mRNA"/>
</dbReference>
<dbReference type="EMBL" id="BC048677">
    <property type="protein sequence ID" value="AAH48677.1"/>
    <property type="molecule type" value="mRNA"/>
</dbReference>
<dbReference type="EMBL" id="BC086808">
    <property type="protein sequence ID" value="AAH86808.1"/>
    <property type="status" value="ALT_INIT"/>
    <property type="molecule type" value="mRNA"/>
</dbReference>
<dbReference type="EMBL" id="BB255707">
    <property type="status" value="NOT_ANNOTATED_CDS"/>
    <property type="molecule type" value="mRNA"/>
</dbReference>
<dbReference type="CCDS" id="CCDS36359.1">
    <molecule id="Q5PR68-1"/>
</dbReference>
<dbReference type="CCDS" id="CCDS48966.1">
    <molecule id="Q5PR68-2"/>
</dbReference>
<dbReference type="RefSeq" id="NP_001360828.1">
    <molecule id="Q5PR68-1"/>
    <property type="nucleotide sequence ID" value="NM_001373899.1"/>
</dbReference>
<dbReference type="RefSeq" id="NP_083862.1">
    <property type="nucleotide sequence ID" value="NM_029586.2"/>
</dbReference>
<dbReference type="RefSeq" id="NP_083882.3">
    <molecule id="Q5PR68-1"/>
    <property type="nucleotide sequence ID" value="NM_029606.3"/>
</dbReference>
<dbReference type="RefSeq" id="NP_663721.2">
    <molecule id="Q5PR68-2"/>
    <property type="nucleotide sequence ID" value="NM_145688.2"/>
</dbReference>
<dbReference type="RefSeq" id="XP_011247602.1">
    <property type="nucleotide sequence ID" value="XM_011249300.2"/>
</dbReference>
<dbReference type="BioGRID" id="218090">
    <property type="interactions" value="3"/>
</dbReference>
<dbReference type="FunCoup" id="Q5PR68">
    <property type="interactions" value="299"/>
</dbReference>
<dbReference type="STRING" id="10090.ENSMUSP00000050597"/>
<dbReference type="iPTMnet" id="Q5PR68"/>
<dbReference type="PhosphoSitePlus" id="Q5PR68"/>
<dbReference type="jPOST" id="Q5PR68"/>
<dbReference type="PaxDb" id="10090-ENSMUSP00000102326"/>
<dbReference type="ProteomicsDB" id="281363">
    <molecule id="Q5PR68-1"/>
</dbReference>
<dbReference type="ProteomicsDB" id="281364">
    <molecule id="Q5PR68-2"/>
</dbReference>
<dbReference type="Antibodypedia" id="19170">
    <property type="antibodies" value="131 antibodies from 24 providers"/>
</dbReference>
<dbReference type="DNASU" id="76380"/>
<dbReference type="Ensembl" id="ENSMUST00000061287.12">
    <molecule id="Q5PR68-1"/>
    <property type="protein sequence ID" value="ENSMUSP00000050597.6"/>
    <property type="gene ID" value="ENSMUSG00000020728.18"/>
</dbReference>
<dbReference type="Ensembl" id="ENSMUST00000106715.8">
    <molecule id="Q5PR68-2"/>
    <property type="protein sequence ID" value="ENSMUSP00000102326.3"/>
    <property type="gene ID" value="ENSMUSG00000020728.18"/>
</dbReference>
<dbReference type="Ensembl" id="ENSMUST00000130515.9">
    <molecule id="Q5PR68-1"/>
    <property type="protein sequence ID" value="ENSMUSP00000114569.3"/>
    <property type="gene ID" value="ENSMUSG00000020728.18"/>
</dbReference>
<dbReference type="GeneID" id="76380"/>
<dbReference type="KEGG" id="mmu:76380"/>
<dbReference type="UCSC" id="uc007mbr.1">
    <molecule id="Q5PR68-1"/>
    <property type="organism name" value="mouse"/>
</dbReference>
<dbReference type="UCSC" id="uc007mbs.1">
    <molecule id="Q5PR68-2"/>
    <property type="organism name" value="mouse"/>
</dbReference>
<dbReference type="AGR" id="MGI:1923673"/>
<dbReference type="CTD" id="201134"/>
<dbReference type="MGI" id="MGI:1923673">
    <property type="gene designation" value="Cep112"/>
</dbReference>
<dbReference type="VEuPathDB" id="HostDB:ENSMUSG00000020728"/>
<dbReference type="eggNOG" id="ENOG502QQAE">
    <property type="taxonomic scope" value="Eukaryota"/>
</dbReference>
<dbReference type="GeneTree" id="ENSGT00390000006544"/>
<dbReference type="HOGENOM" id="CLU_131263_0_0_1"/>
<dbReference type="InParanoid" id="Q5PR68"/>
<dbReference type="OMA" id="RMHEKEX"/>
<dbReference type="OrthoDB" id="66747at9989"/>
<dbReference type="PhylomeDB" id="Q5PR68"/>
<dbReference type="TreeFam" id="TF328995"/>
<dbReference type="BioGRID-ORCS" id="76380">
    <property type="hits" value="5 hits in 74 CRISPR screens"/>
</dbReference>
<dbReference type="ChiTaRS" id="Cep112">
    <property type="organism name" value="mouse"/>
</dbReference>
<dbReference type="PRO" id="PR:Q5PR68"/>
<dbReference type="Proteomes" id="UP000000589">
    <property type="component" value="Chromosome 11"/>
</dbReference>
<dbReference type="RNAct" id="Q5PR68">
    <property type="molecule type" value="protein"/>
</dbReference>
<dbReference type="Bgee" id="ENSMUSG00000020728">
    <property type="expression patterns" value="Expressed in spermatid and 236 other cell types or tissues"/>
</dbReference>
<dbReference type="ExpressionAtlas" id="Q5PR68">
    <property type="expression patterns" value="baseline and differential"/>
</dbReference>
<dbReference type="GO" id="GO:0005813">
    <property type="term" value="C:centrosome"/>
    <property type="evidence" value="ECO:0000250"/>
    <property type="project" value="UniProtKB"/>
</dbReference>
<dbReference type="GO" id="GO:0005737">
    <property type="term" value="C:cytoplasm"/>
    <property type="evidence" value="ECO:0007669"/>
    <property type="project" value="UniProtKB-KW"/>
</dbReference>
<dbReference type="GO" id="GO:0060077">
    <property type="term" value="C:inhibitory synapse"/>
    <property type="evidence" value="ECO:0000266"/>
    <property type="project" value="MGI"/>
</dbReference>
<dbReference type="GO" id="GO:0005886">
    <property type="term" value="C:plasma membrane"/>
    <property type="evidence" value="ECO:0000266"/>
    <property type="project" value="MGI"/>
</dbReference>
<dbReference type="GO" id="GO:0097120">
    <property type="term" value="P:receptor localization to synapse"/>
    <property type="evidence" value="ECO:0000266"/>
    <property type="project" value="MGI"/>
</dbReference>
<dbReference type="InterPro" id="IPR055310">
    <property type="entry name" value="CEP112"/>
</dbReference>
<dbReference type="InterPro" id="IPR027831">
    <property type="entry name" value="DUF4485"/>
</dbReference>
<dbReference type="PANTHER" id="PTHR18871">
    <property type="entry name" value="CENTROSOMAL PROTEIN OF 112 KDA"/>
    <property type="match status" value="1"/>
</dbReference>
<dbReference type="PANTHER" id="PTHR18871:SF2">
    <property type="entry name" value="CENTROSOMAL PROTEIN OF 112 KDA"/>
    <property type="match status" value="1"/>
</dbReference>
<dbReference type="Pfam" id="PF14846">
    <property type="entry name" value="DUF4485"/>
    <property type="match status" value="1"/>
</dbReference>
<keyword id="KW-0025">Alternative splicing</keyword>
<keyword id="KW-0175">Coiled coil</keyword>
<keyword id="KW-0963">Cytoplasm</keyword>
<keyword id="KW-0206">Cytoskeleton</keyword>
<keyword id="KW-1185">Reference proteome</keyword>
<feature type="chain" id="PRO_0000234509" description="Centrosomal protein of 112 kDa">
    <location>
        <begin position="1"/>
        <end position="954"/>
    </location>
</feature>
<feature type="coiled-coil region" evidence="2">
    <location>
        <begin position="276"/>
        <end position="954"/>
    </location>
</feature>
<feature type="splice variant" id="VSP_018340" description="In isoform 2." evidence="3 4">
    <location>
        <begin position="1"/>
        <end position="781"/>
    </location>
</feature>
<feature type="splice variant" id="VSP_018341" description="In isoform 2." evidence="3 4">
    <original>ELKKTHAAETEMTLEK</original>
    <variation>MRPLRDTGPSVPKENM</variation>
    <location>
        <begin position="782"/>
        <end position="797"/>
    </location>
</feature>
<evidence type="ECO:0000250" key="1"/>
<evidence type="ECO:0000255" key="2"/>
<evidence type="ECO:0000303" key="3">
    <source>
    </source>
</evidence>
<evidence type="ECO:0000303" key="4">
    <source>
    </source>
</evidence>
<evidence type="ECO:0000305" key="5"/>
<name>CE112_MOUSE</name>